<accession>Q8FE19</accession>
<name>FETP_ECOL6</name>
<dbReference type="EMBL" id="AE014075">
    <property type="protein sequence ID" value="AAN81998.1"/>
    <property type="molecule type" value="Genomic_DNA"/>
</dbReference>
<dbReference type="RefSeq" id="WP_000091699.1">
    <property type="nucleotide sequence ID" value="NZ_CP051263.1"/>
</dbReference>
<dbReference type="SMR" id="Q8FE19"/>
<dbReference type="STRING" id="199310.c3550"/>
<dbReference type="KEGG" id="ecc:c3550"/>
<dbReference type="eggNOG" id="COG2924">
    <property type="taxonomic scope" value="Bacteria"/>
</dbReference>
<dbReference type="HOGENOM" id="CLU_170994_0_0_6"/>
<dbReference type="BioCyc" id="ECOL199310:C3550-MONOMER"/>
<dbReference type="Proteomes" id="UP000001410">
    <property type="component" value="Chromosome"/>
</dbReference>
<dbReference type="GO" id="GO:0005829">
    <property type="term" value="C:cytosol"/>
    <property type="evidence" value="ECO:0007669"/>
    <property type="project" value="TreeGrafter"/>
</dbReference>
<dbReference type="GO" id="GO:0005506">
    <property type="term" value="F:iron ion binding"/>
    <property type="evidence" value="ECO:0007669"/>
    <property type="project" value="UniProtKB-UniRule"/>
</dbReference>
<dbReference type="GO" id="GO:0034599">
    <property type="term" value="P:cellular response to oxidative stress"/>
    <property type="evidence" value="ECO:0007669"/>
    <property type="project" value="TreeGrafter"/>
</dbReference>
<dbReference type="FunFam" id="1.10.3880.10:FF:000001">
    <property type="entry name" value="Probable Fe(2+)-trafficking protein"/>
    <property type="match status" value="1"/>
</dbReference>
<dbReference type="Gene3D" id="1.10.3880.10">
    <property type="entry name" value="Fe(II) trafficking protein YggX"/>
    <property type="match status" value="1"/>
</dbReference>
<dbReference type="HAMAP" id="MF_00686">
    <property type="entry name" value="Fe_traffic_YggX"/>
    <property type="match status" value="1"/>
</dbReference>
<dbReference type="InterPro" id="IPR007457">
    <property type="entry name" value="Fe_traffick_prot_YggX"/>
</dbReference>
<dbReference type="InterPro" id="IPR036766">
    <property type="entry name" value="Fe_traffick_prot_YggX_sf"/>
</dbReference>
<dbReference type="NCBIfam" id="NF003817">
    <property type="entry name" value="PRK05408.1"/>
    <property type="match status" value="1"/>
</dbReference>
<dbReference type="PANTHER" id="PTHR36965">
    <property type="entry name" value="FE(2+)-TRAFFICKING PROTEIN-RELATED"/>
    <property type="match status" value="1"/>
</dbReference>
<dbReference type="PANTHER" id="PTHR36965:SF1">
    <property type="entry name" value="FE(2+)-TRAFFICKING PROTEIN-RELATED"/>
    <property type="match status" value="1"/>
</dbReference>
<dbReference type="Pfam" id="PF04362">
    <property type="entry name" value="Iron_traffic"/>
    <property type="match status" value="1"/>
</dbReference>
<dbReference type="PIRSF" id="PIRSF029827">
    <property type="entry name" value="Fe_traffic_YggX"/>
    <property type="match status" value="1"/>
</dbReference>
<dbReference type="SUPFAM" id="SSF111148">
    <property type="entry name" value="YggX-like"/>
    <property type="match status" value="1"/>
</dbReference>
<organism>
    <name type="scientific">Escherichia coli O6:H1 (strain CFT073 / ATCC 700928 / UPEC)</name>
    <dbReference type="NCBI Taxonomy" id="199310"/>
    <lineage>
        <taxon>Bacteria</taxon>
        <taxon>Pseudomonadati</taxon>
        <taxon>Pseudomonadota</taxon>
        <taxon>Gammaproteobacteria</taxon>
        <taxon>Enterobacterales</taxon>
        <taxon>Enterobacteriaceae</taxon>
        <taxon>Escherichia</taxon>
    </lineage>
</organism>
<gene>
    <name evidence="2" type="primary">yggX</name>
    <name type="ordered locus">c3550</name>
</gene>
<sequence length="91" mass="10937">MSRTIFCTFLQREAEGQDFQLYPGELGKRIYNEISKEAWAQWQHKQTMLINEKKLNMMNAEHRKLLEQEMVNFLFEGKEVHIEGFTPEDKK</sequence>
<proteinExistence type="inferred from homology"/>
<comment type="function">
    <text evidence="2">Could be a mediator in iron transactions between iron acquisition and iron-requiring processes, such as synthesis and/or repair of Fe-S clusters in biosynthetic enzymes.</text>
</comment>
<comment type="subunit">
    <text evidence="2">Monomer.</text>
</comment>
<comment type="similarity">
    <text evidence="2">Belongs to the Fe(2+)-trafficking protein family.</text>
</comment>
<feature type="initiator methionine" description="Removed" evidence="1">
    <location>
        <position position="1"/>
    </location>
</feature>
<feature type="chain" id="PRO_0000214480" description="Probable Fe(2+)-trafficking protein">
    <location>
        <begin position="2"/>
        <end position="91"/>
    </location>
</feature>
<protein>
    <recommendedName>
        <fullName evidence="2">Probable Fe(2+)-trafficking protein</fullName>
    </recommendedName>
</protein>
<evidence type="ECO:0000250" key="1"/>
<evidence type="ECO:0000255" key="2">
    <source>
        <dbReference type="HAMAP-Rule" id="MF_00686"/>
    </source>
</evidence>
<reference key="1">
    <citation type="journal article" date="2002" name="Proc. Natl. Acad. Sci. U.S.A.">
        <title>Extensive mosaic structure revealed by the complete genome sequence of uropathogenic Escherichia coli.</title>
        <authorList>
            <person name="Welch R.A."/>
            <person name="Burland V."/>
            <person name="Plunkett G. III"/>
            <person name="Redford P."/>
            <person name="Roesch P."/>
            <person name="Rasko D."/>
            <person name="Buckles E.L."/>
            <person name="Liou S.-R."/>
            <person name="Boutin A."/>
            <person name="Hackett J."/>
            <person name="Stroud D."/>
            <person name="Mayhew G.F."/>
            <person name="Rose D.J."/>
            <person name="Zhou S."/>
            <person name="Schwartz D.C."/>
            <person name="Perna N.T."/>
            <person name="Mobley H.L.T."/>
            <person name="Donnenberg M.S."/>
            <person name="Blattner F.R."/>
        </authorList>
    </citation>
    <scope>NUCLEOTIDE SEQUENCE [LARGE SCALE GENOMIC DNA]</scope>
    <source>
        <strain>CFT073 / ATCC 700928 / UPEC</strain>
    </source>
</reference>
<keyword id="KW-0408">Iron</keyword>
<keyword id="KW-1185">Reference proteome</keyword>